<accession>Q042L1</accession>
<evidence type="ECO:0000255" key="1">
    <source>
        <dbReference type="HAMAP-Rule" id="MF_01398"/>
    </source>
</evidence>
<reference key="1">
    <citation type="journal article" date="2006" name="Proc. Natl. Acad. Sci. U.S.A.">
        <title>Comparative genomics of the lactic acid bacteria.</title>
        <authorList>
            <person name="Makarova K.S."/>
            <person name="Slesarev A."/>
            <person name="Wolf Y.I."/>
            <person name="Sorokin A."/>
            <person name="Mirkin B."/>
            <person name="Koonin E.V."/>
            <person name="Pavlov A."/>
            <person name="Pavlova N."/>
            <person name="Karamychev V."/>
            <person name="Polouchine N."/>
            <person name="Shakhova V."/>
            <person name="Grigoriev I."/>
            <person name="Lou Y."/>
            <person name="Rohksar D."/>
            <person name="Lucas S."/>
            <person name="Huang K."/>
            <person name="Goodstein D.M."/>
            <person name="Hawkins T."/>
            <person name="Plengvidhya V."/>
            <person name="Welker D."/>
            <person name="Hughes J."/>
            <person name="Goh Y."/>
            <person name="Benson A."/>
            <person name="Baldwin K."/>
            <person name="Lee J.-H."/>
            <person name="Diaz-Muniz I."/>
            <person name="Dosti B."/>
            <person name="Smeianov V."/>
            <person name="Wechter W."/>
            <person name="Barabote R."/>
            <person name="Lorca G."/>
            <person name="Altermann E."/>
            <person name="Barrangou R."/>
            <person name="Ganesan B."/>
            <person name="Xie Y."/>
            <person name="Rawsthorne H."/>
            <person name="Tamir D."/>
            <person name="Parker C."/>
            <person name="Breidt F."/>
            <person name="Broadbent J.R."/>
            <person name="Hutkins R."/>
            <person name="O'Sullivan D."/>
            <person name="Steele J."/>
            <person name="Unlu G."/>
            <person name="Saier M.H. Jr."/>
            <person name="Klaenhammer T."/>
            <person name="Richardson P."/>
            <person name="Kozyavkin S."/>
            <person name="Weimer B.C."/>
            <person name="Mills D.A."/>
        </authorList>
    </citation>
    <scope>NUCLEOTIDE SEQUENCE [LARGE SCALE GENOMIC DNA]</scope>
    <source>
        <strain>ATCC 33323 / DSM 20243 / BCRC 14619 / CIP 102991 / JCM 1131 / KCTC 3163 / NCIMB 11718 / NCTC 13722 / AM63</strain>
    </source>
</reference>
<protein>
    <recommendedName>
        <fullName evidence="1">ATP synthase subunit b</fullName>
    </recommendedName>
    <alternativeName>
        <fullName evidence="1">ATP synthase F(0) sector subunit b</fullName>
    </alternativeName>
    <alternativeName>
        <fullName evidence="1">ATPase subunit I</fullName>
    </alternativeName>
    <alternativeName>
        <fullName evidence="1">F-type ATPase subunit b</fullName>
        <shortName evidence="1">F-ATPase subunit b</shortName>
    </alternativeName>
</protein>
<organism>
    <name type="scientific">Lactobacillus gasseri (strain ATCC 33323 / DSM 20243 / BCRC 14619 / CIP 102991 / JCM 1131 / KCTC 3163 / NCIMB 11718 / NCTC 13722 / AM63)</name>
    <dbReference type="NCBI Taxonomy" id="324831"/>
    <lineage>
        <taxon>Bacteria</taxon>
        <taxon>Bacillati</taxon>
        <taxon>Bacillota</taxon>
        <taxon>Bacilli</taxon>
        <taxon>Lactobacillales</taxon>
        <taxon>Lactobacillaceae</taxon>
        <taxon>Lactobacillus</taxon>
    </lineage>
</organism>
<proteinExistence type="inferred from homology"/>
<feature type="chain" id="PRO_0000368544" description="ATP synthase subunit b">
    <location>
        <begin position="1"/>
        <end position="166"/>
    </location>
</feature>
<feature type="transmembrane region" description="Helical" evidence="1">
    <location>
        <begin position="15"/>
        <end position="37"/>
    </location>
</feature>
<gene>
    <name evidence="1" type="primary">atpF</name>
    <name type="ordered locus">LGAS_1242</name>
</gene>
<comment type="function">
    <text evidence="1">F(1)F(0) ATP synthase produces ATP from ADP in the presence of a proton or sodium gradient. F-type ATPases consist of two structural domains, F(1) containing the extramembraneous catalytic core and F(0) containing the membrane proton channel, linked together by a central stalk and a peripheral stalk. During catalysis, ATP synthesis in the catalytic domain of F(1) is coupled via a rotary mechanism of the central stalk subunits to proton translocation.</text>
</comment>
<comment type="function">
    <text evidence="1">Component of the F(0) channel, it forms part of the peripheral stalk, linking F(1) to F(0).</text>
</comment>
<comment type="subunit">
    <text evidence="1">F-type ATPases have 2 components, F(1) - the catalytic core - and F(0) - the membrane proton channel. F(1) has five subunits: alpha(3), beta(3), gamma(1), delta(1), epsilon(1). F(0) has three main subunits: a(1), b(2) and c(10-14). The alpha and beta chains form an alternating ring which encloses part of the gamma chain. F(1) is attached to F(0) by a central stalk formed by the gamma and epsilon chains, while a peripheral stalk is formed by the delta and b chains.</text>
</comment>
<comment type="subcellular location">
    <subcellularLocation>
        <location evidence="1">Cell membrane</location>
        <topology evidence="1">Single-pass membrane protein</topology>
    </subcellularLocation>
</comment>
<comment type="similarity">
    <text evidence="1">Belongs to the ATPase B chain family.</text>
</comment>
<dbReference type="EMBL" id="CP000413">
    <property type="protein sequence ID" value="ABJ60611.1"/>
    <property type="molecule type" value="Genomic_DNA"/>
</dbReference>
<dbReference type="RefSeq" id="WP_003647068.1">
    <property type="nucleotide sequence ID" value="NZ_WBMG01000002.1"/>
</dbReference>
<dbReference type="SMR" id="Q042L1"/>
<dbReference type="GeneID" id="29639043"/>
<dbReference type="KEGG" id="lga:LGAS_1242"/>
<dbReference type="HOGENOM" id="CLU_079215_4_2_9"/>
<dbReference type="BioCyc" id="LGAS324831:G1G6Y-1238-MONOMER"/>
<dbReference type="Proteomes" id="UP000000664">
    <property type="component" value="Chromosome"/>
</dbReference>
<dbReference type="GO" id="GO:0005886">
    <property type="term" value="C:plasma membrane"/>
    <property type="evidence" value="ECO:0007669"/>
    <property type="project" value="UniProtKB-SubCell"/>
</dbReference>
<dbReference type="GO" id="GO:0045259">
    <property type="term" value="C:proton-transporting ATP synthase complex"/>
    <property type="evidence" value="ECO:0007669"/>
    <property type="project" value="UniProtKB-KW"/>
</dbReference>
<dbReference type="GO" id="GO:0046933">
    <property type="term" value="F:proton-transporting ATP synthase activity, rotational mechanism"/>
    <property type="evidence" value="ECO:0007669"/>
    <property type="project" value="UniProtKB-UniRule"/>
</dbReference>
<dbReference type="GO" id="GO:0046961">
    <property type="term" value="F:proton-transporting ATPase activity, rotational mechanism"/>
    <property type="evidence" value="ECO:0007669"/>
    <property type="project" value="TreeGrafter"/>
</dbReference>
<dbReference type="CDD" id="cd06503">
    <property type="entry name" value="ATP-synt_Fo_b"/>
    <property type="match status" value="1"/>
</dbReference>
<dbReference type="Gene3D" id="6.10.250.1580">
    <property type="match status" value="1"/>
</dbReference>
<dbReference type="HAMAP" id="MF_01398">
    <property type="entry name" value="ATP_synth_b_bprime"/>
    <property type="match status" value="1"/>
</dbReference>
<dbReference type="InterPro" id="IPR002146">
    <property type="entry name" value="ATP_synth_b/b'su_bac/chlpt"/>
</dbReference>
<dbReference type="InterPro" id="IPR005864">
    <property type="entry name" value="ATP_synth_F0_bsu_bac"/>
</dbReference>
<dbReference type="InterPro" id="IPR050059">
    <property type="entry name" value="ATP_synthase_B_chain"/>
</dbReference>
<dbReference type="NCBIfam" id="TIGR01144">
    <property type="entry name" value="ATP_synt_b"/>
    <property type="match status" value="1"/>
</dbReference>
<dbReference type="PANTHER" id="PTHR33445:SF1">
    <property type="entry name" value="ATP SYNTHASE SUBUNIT B"/>
    <property type="match status" value="1"/>
</dbReference>
<dbReference type="PANTHER" id="PTHR33445">
    <property type="entry name" value="ATP SYNTHASE SUBUNIT B', CHLOROPLASTIC"/>
    <property type="match status" value="1"/>
</dbReference>
<dbReference type="Pfam" id="PF00430">
    <property type="entry name" value="ATP-synt_B"/>
    <property type="match status" value="1"/>
</dbReference>
<name>ATPF_LACGA</name>
<sequence>MQFMFAALKLELGDTLYYLLIFAALLLLVKHFAWGPVTKMMEKRRQKVISDLDQAESDRKKAALLANQREAALKDSKQEATQILSTAKRNAEKTKSSIISQADQEAAAIRERASKDAAQAKTDALNEARDQVADISVAIAEKVISKSLSAADQKDLVDQFIKGLND</sequence>
<keyword id="KW-0066">ATP synthesis</keyword>
<keyword id="KW-1003">Cell membrane</keyword>
<keyword id="KW-0138">CF(0)</keyword>
<keyword id="KW-0375">Hydrogen ion transport</keyword>
<keyword id="KW-0406">Ion transport</keyword>
<keyword id="KW-0472">Membrane</keyword>
<keyword id="KW-0812">Transmembrane</keyword>
<keyword id="KW-1133">Transmembrane helix</keyword>
<keyword id="KW-0813">Transport</keyword>